<dbReference type="EMBL" id="AE002098">
    <property type="protein sequence ID" value="AAF42266.1"/>
    <property type="molecule type" value="Genomic_DNA"/>
</dbReference>
<dbReference type="PIR" id="B81025">
    <property type="entry name" value="B81025"/>
</dbReference>
<dbReference type="RefSeq" id="NP_274931.1">
    <property type="nucleotide sequence ID" value="NC_003112.2"/>
</dbReference>
<dbReference type="RefSeq" id="WP_002225831.1">
    <property type="nucleotide sequence ID" value="NC_003112.2"/>
</dbReference>
<dbReference type="SMR" id="Q9JXP9"/>
<dbReference type="FunCoup" id="Q9JXP9">
    <property type="interactions" value="347"/>
</dbReference>
<dbReference type="STRING" id="122586.NMB1937"/>
<dbReference type="PaxDb" id="122586-NMB1937"/>
<dbReference type="KEGG" id="nme:NMB1937"/>
<dbReference type="PATRIC" id="fig|122586.8.peg.2465"/>
<dbReference type="HOGENOM" id="CLU_085114_3_0_4"/>
<dbReference type="InParanoid" id="Q9JXP9"/>
<dbReference type="OrthoDB" id="9816221at2"/>
<dbReference type="Proteomes" id="UP000000425">
    <property type="component" value="Chromosome"/>
</dbReference>
<dbReference type="GO" id="GO:0005886">
    <property type="term" value="C:plasma membrane"/>
    <property type="evidence" value="ECO:0007669"/>
    <property type="project" value="UniProtKB-SubCell"/>
</dbReference>
<dbReference type="GO" id="GO:0045259">
    <property type="term" value="C:proton-transporting ATP synthase complex"/>
    <property type="evidence" value="ECO:0007669"/>
    <property type="project" value="UniProtKB-KW"/>
</dbReference>
<dbReference type="GO" id="GO:0046933">
    <property type="term" value="F:proton-transporting ATP synthase activity, rotational mechanism"/>
    <property type="evidence" value="ECO:0007669"/>
    <property type="project" value="UniProtKB-UniRule"/>
</dbReference>
<dbReference type="GO" id="GO:0015986">
    <property type="term" value="P:proton motive force-driven ATP synthesis"/>
    <property type="evidence" value="ECO:0000318"/>
    <property type="project" value="GO_Central"/>
</dbReference>
<dbReference type="Gene3D" id="1.10.520.20">
    <property type="entry name" value="N-terminal domain of the delta subunit of the F1F0-ATP synthase"/>
    <property type="match status" value="1"/>
</dbReference>
<dbReference type="HAMAP" id="MF_01416">
    <property type="entry name" value="ATP_synth_delta_bact"/>
    <property type="match status" value="1"/>
</dbReference>
<dbReference type="InterPro" id="IPR026015">
    <property type="entry name" value="ATP_synth_OSCP/delta_N_sf"/>
</dbReference>
<dbReference type="InterPro" id="IPR020781">
    <property type="entry name" value="ATPase_OSCP/d_CS"/>
</dbReference>
<dbReference type="InterPro" id="IPR000711">
    <property type="entry name" value="ATPase_OSCP/dsu"/>
</dbReference>
<dbReference type="NCBIfam" id="TIGR01145">
    <property type="entry name" value="ATP_synt_delta"/>
    <property type="match status" value="1"/>
</dbReference>
<dbReference type="NCBIfam" id="NF004402">
    <property type="entry name" value="PRK05758.2-2"/>
    <property type="match status" value="1"/>
</dbReference>
<dbReference type="PANTHER" id="PTHR11910">
    <property type="entry name" value="ATP SYNTHASE DELTA CHAIN"/>
    <property type="match status" value="1"/>
</dbReference>
<dbReference type="Pfam" id="PF00213">
    <property type="entry name" value="OSCP"/>
    <property type="match status" value="1"/>
</dbReference>
<dbReference type="PRINTS" id="PR00125">
    <property type="entry name" value="ATPASEDELTA"/>
</dbReference>
<dbReference type="SUPFAM" id="SSF47928">
    <property type="entry name" value="N-terminal domain of the delta subunit of the F1F0-ATP synthase"/>
    <property type="match status" value="1"/>
</dbReference>
<dbReference type="PROSITE" id="PS00389">
    <property type="entry name" value="ATPASE_DELTA"/>
    <property type="match status" value="1"/>
</dbReference>
<protein>
    <recommendedName>
        <fullName evidence="1">ATP synthase subunit delta</fullName>
    </recommendedName>
    <alternativeName>
        <fullName evidence="1">ATP synthase F(1) sector subunit delta</fullName>
    </alternativeName>
    <alternativeName>
        <fullName evidence="1">F-type ATPase subunit delta</fullName>
        <shortName evidence="1">F-ATPase subunit delta</shortName>
    </alternativeName>
</protein>
<comment type="function">
    <text evidence="1">F(1)F(0) ATP synthase produces ATP from ADP in the presence of a proton or sodium gradient. F-type ATPases consist of two structural domains, F(1) containing the extramembraneous catalytic core and F(0) containing the membrane proton channel, linked together by a central stalk and a peripheral stalk. During catalysis, ATP synthesis in the catalytic domain of F(1) is coupled via a rotary mechanism of the central stalk subunits to proton translocation.</text>
</comment>
<comment type="function">
    <text evidence="1">This protein is part of the stalk that links CF(0) to CF(1). It either transmits conformational changes from CF(0) to CF(1) or is implicated in proton conduction.</text>
</comment>
<comment type="subunit">
    <text evidence="1">F-type ATPases have 2 components, F(1) - the catalytic core - and F(0) - the membrane proton channel. F(1) has five subunits: alpha(3), beta(3), gamma(1), delta(1), epsilon(1). F(0) has three main subunits: a(1), b(2) and c(10-14). The alpha and beta chains form an alternating ring which encloses part of the gamma chain. F(1) is attached to F(0) by a central stalk formed by the gamma and epsilon chains, while a peripheral stalk is formed by the delta and b chains.</text>
</comment>
<comment type="subcellular location">
    <subcellularLocation>
        <location evidence="1">Cell inner membrane</location>
        <topology evidence="1">Peripheral membrane protein</topology>
    </subcellularLocation>
</comment>
<comment type="similarity">
    <text evidence="1">Belongs to the ATPase delta chain family.</text>
</comment>
<gene>
    <name evidence="1" type="primary">atpH</name>
    <name type="ordered locus">NMB1937</name>
</gene>
<reference key="1">
    <citation type="journal article" date="2000" name="Science">
        <title>Complete genome sequence of Neisseria meningitidis serogroup B strain MC58.</title>
        <authorList>
            <person name="Tettelin H."/>
            <person name="Saunders N.J."/>
            <person name="Heidelberg J.F."/>
            <person name="Jeffries A.C."/>
            <person name="Nelson K.E."/>
            <person name="Eisen J.A."/>
            <person name="Ketchum K.A."/>
            <person name="Hood D.W."/>
            <person name="Peden J.F."/>
            <person name="Dodson R.J."/>
            <person name="Nelson W.C."/>
            <person name="Gwinn M.L."/>
            <person name="DeBoy R.T."/>
            <person name="Peterson J.D."/>
            <person name="Hickey E.K."/>
            <person name="Haft D.H."/>
            <person name="Salzberg S.L."/>
            <person name="White O."/>
            <person name="Fleischmann R.D."/>
            <person name="Dougherty B.A."/>
            <person name="Mason T.M."/>
            <person name="Ciecko A."/>
            <person name="Parksey D.S."/>
            <person name="Blair E."/>
            <person name="Cittone H."/>
            <person name="Clark E.B."/>
            <person name="Cotton M.D."/>
            <person name="Utterback T.R."/>
            <person name="Khouri H.M."/>
            <person name="Qin H."/>
            <person name="Vamathevan J.J."/>
            <person name="Gill J."/>
            <person name="Scarlato V."/>
            <person name="Masignani V."/>
            <person name="Pizza M."/>
            <person name="Grandi G."/>
            <person name="Sun L."/>
            <person name="Smith H.O."/>
            <person name="Fraser C.M."/>
            <person name="Moxon E.R."/>
            <person name="Rappuoli R."/>
            <person name="Venter J.C."/>
        </authorList>
    </citation>
    <scope>NUCLEOTIDE SEQUENCE [LARGE SCALE GENOMIC DNA]</scope>
    <source>
        <strain>ATCC BAA-335 / MC58</strain>
    </source>
</reference>
<name>ATPD_NEIMB</name>
<proteinExistence type="inferred from homology"/>
<accession>Q9JXP9</accession>
<sequence length="177" mass="19526">MAEFATIARPYAKALFGLAQEKNQIESWLGGLEKLAAVVQEGKVASLIDRPETNASEKADILIDLVGLKDKELKNFVIVLAGQKRLSILPEVYAQYQDLTLSFNHIKSAVIYSAYPLTDKQVGELVQMLNKRFDSELKISVEIEPELIGGIKVEVGDQVLDLSVQGKLSALYTTMTN</sequence>
<feature type="chain" id="PRO_0000371035" description="ATP synthase subunit delta">
    <location>
        <begin position="1"/>
        <end position="177"/>
    </location>
</feature>
<organism>
    <name type="scientific">Neisseria meningitidis serogroup B (strain ATCC BAA-335 / MC58)</name>
    <dbReference type="NCBI Taxonomy" id="122586"/>
    <lineage>
        <taxon>Bacteria</taxon>
        <taxon>Pseudomonadati</taxon>
        <taxon>Pseudomonadota</taxon>
        <taxon>Betaproteobacteria</taxon>
        <taxon>Neisseriales</taxon>
        <taxon>Neisseriaceae</taxon>
        <taxon>Neisseria</taxon>
    </lineage>
</organism>
<evidence type="ECO:0000255" key="1">
    <source>
        <dbReference type="HAMAP-Rule" id="MF_01416"/>
    </source>
</evidence>
<keyword id="KW-0066">ATP synthesis</keyword>
<keyword id="KW-0997">Cell inner membrane</keyword>
<keyword id="KW-1003">Cell membrane</keyword>
<keyword id="KW-0139">CF(1)</keyword>
<keyword id="KW-0375">Hydrogen ion transport</keyword>
<keyword id="KW-0406">Ion transport</keyword>
<keyword id="KW-0472">Membrane</keyword>
<keyword id="KW-1185">Reference proteome</keyword>
<keyword id="KW-0813">Transport</keyword>